<accession>A8GL91</accession>
<proteinExistence type="inferred from homology"/>
<evidence type="ECO:0000255" key="1">
    <source>
        <dbReference type="HAMAP-Rule" id="MF_00501"/>
    </source>
</evidence>
<evidence type="ECO:0000305" key="2"/>
<sequence>MKQGIHPKYEEVTANCSCGNVIKIRSTVGHDLNLDVCGECHPFYTGKQRDVATGGRVDRFNKRFSVPGAKK</sequence>
<gene>
    <name evidence="1" type="primary">rpmE</name>
    <name type="ordered locus">Spro_4788</name>
</gene>
<keyword id="KW-0479">Metal-binding</keyword>
<keyword id="KW-0687">Ribonucleoprotein</keyword>
<keyword id="KW-0689">Ribosomal protein</keyword>
<keyword id="KW-0694">RNA-binding</keyword>
<keyword id="KW-0699">rRNA-binding</keyword>
<keyword id="KW-0862">Zinc</keyword>
<feature type="chain" id="PRO_1000126725" description="Large ribosomal subunit protein bL31">
    <location>
        <begin position="1"/>
        <end position="71"/>
    </location>
</feature>
<feature type="binding site" evidence="1">
    <location>
        <position position="16"/>
    </location>
    <ligand>
        <name>Zn(2+)</name>
        <dbReference type="ChEBI" id="CHEBI:29105"/>
    </ligand>
</feature>
<feature type="binding site" evidence="1">
    <location>
        <position position="18"/>
    </location>
    <ligand>
        <name>Zn(2+)</name>
        <dbReference type="ChEBI" id="CHEBI:29105"/>
    </ligand>
</feature>
<feature type="binding site" evidence="1">
    <location>
        <position position="37"/>
    </location>
    <ligand>
        <name>Zn(2+)</name>
        <dbReference type="ChEBI" id="CHEBI:29105"/>
    </ligand>
</feature>
<feature type="binding site" evidence="1">
    <location>
        <position position="40"/>
    </location>
    <ligand>
        <name>Zn(2+)</name>
        <dbReference type="ChEBI" id="CHEBI:29105"/>
    </ligand>
</feature>
<organism>
    <name type="scientific">Serratia proteamaculans (strain 568)</name>
    <dbReference type="NCBI Taxonomy" id="399741"/>
    <lineage>
        <taxon>Bacteria</taxon>
        <taxon>Pseudomonadati</taxon>
        <taxon>Pseudomonadota</taxon>
        <taxon>Gammaproteobacteria</taxon>
        <taxon>Enterobacterales</taxon>
        <taxon>Yersiniaceae</taxon>
        <taxon>Serratia</taxon>
    </lineage>
</organism>
<protein>
    <recommendedName>
        <fullName evidence="1">Large ribosomal subunit protein bL31</fullName>
    </recommendedName>
    <alternativeName>
        <fullName evidence="2">50S ribosomal protein L31</fullName>
    </alternativeName>
</protein>
<dbReference type="EMBL" id="CP000826">
    <property type="protein sequence ID" value="ABV43881.1"/>
    <property type="molecule type" value="Genomic_DNA"/>
</dbReference>
<dbReference type="SMR" id="A8GL91"/>
<dbReference type="STRING" id="399741.Spro_4788"/>
<dbReference type="KEGG" id="spe:Spro_4788"/>
<dbReference type="eggNOG" id="COG0254">
    <property type="taxonomic scope" value="Bacteria"/>
</dbReference>
<dbReference type="HOGENOM" id="CLU_114306_4_3_6"/>
<dbReference type="OrthoDB" id="9803251at2"/>
<dbReference type="GO" id="GO:1990904">
    <property type="term" value="C:ribonucleoprotein complex"/>
    <property type="evidence" value="ECO:0007669"/>
    <property type="project" value="UniProtKB-KW"/>
</dbReference>
<dbReference type="GO" id="GO:0005840">
    <property type="term" value="C:ribosome"/>
    <property type="evidence" value="ECO:0007669"/>
    <property type="project" value="UniProtKB-KW"/>
</dbReference>
<dbReference type="GO" id="GO:0046872">
    <property type="term" value="F:metal ion binding"/>
    <property type="evidence" value="ECO:0007669"/>
    <property type="project" value="UniProtKB-KW"/>
</dbReference>
<dbReference type="GO" id="GO:0019843">
    <property type="term" value="F:rRNA binding"/>
    <property type="evidence" value="ECO:0007669"/>
    <property type="project" value="UniProtKB-KW"/>
</dbReference>
<dbReference type="GO" id="GO:0003735">
    <property type="term" value="F:structural constituent of ribosome"/>
    <property type="evidence" value="ECO:0007669"/>
    <property type="project" value="InterPro"/>
</dbReference>
<dbReference type="GO" id="GO:0006412">
    <property type="term" value="P:translation"/>
    <property type="evidence" value="ECO:0007669"/>
    <property type="project" value="UniProtKB-UniRule"/>
</dbReference>
<dbReference type="FunFam" id="4.10.830.30:FF:000001">
    <property type="entry name" value="50S ribosomal protein L31"/>
    <property type="match status" value="1"/>
</dbReference>
<dbReference type="Gene3D" id="4.10.830.30">
    <property type="entry name" value="Ribosomal protein L31"/>
    <property type="match status" value="1"/>
</dbReference>
<dbReference type="HAMAP" id="MF_00501">
    <property type="entry name" value="Ribosomal_bL31_1"/>
    <property type="match status" value="1"/>
</dbReference>
<dbReference type="InterPro" id="IPR034704">
    <property type="entry name" value="Ribosomal_bL28/bL31-like_sf"/>
</dbReference>
<dbReference type="InterPro" id="IPR002150">
    <property type="entry name" value="Ribosomal_bL31"/>
</dbReference>
<dbReference type="InterPro" id="IPR027491">
    <property type="entry name" value="Ribosomal_bL31_A"/>
</dbReference>
<dbReference type="InterPro" id="IPR042105">
    <property type="entry name" value="Ribosomal_bL31_sf"/>
</dbReference>
<dbReference type="NCBIfam" id="TIGR00105">
    <property type="entry name" value="L31"/>
    <property type="match status" value="1"/>
</dbReference>
<dbReference type="NCBIfam" id="NF000612">
    <property type="entry name" value="PRK00019.1"/>
    <property type="match status" value="1"/>
</dbReference>
<dbReference type="PANTHER" id="PTHR33280">
    <property type="entry name" value="50S RIBOSOMAL PROTEIN L31, CHLOROPLASTIC"/>
    <property type="match status" value="1"/>
</dbReference>
<dbReference type="PANTHER" id="PTHR33280:SF6">
    <property type="entry name" value="LARGE RIBOSOMAL SUBUNIT PROTEIN BL31A"/>
    <property type="match status" value="1"/>
</dbReference>
<dbReference type="Pfam" id="PF01197">
    <property type="entry name" value="Ribosomal_L31"/>
    <property type="match status" value="1"/>
</dbReference>
<dbReference type="PRINTS" id="PR01249">
    <property type="entry name" value="RIBOSOMALL31"/>
</dbReference>
<dbReference type="SUPFAM" id="SSF143800">
    <property type="entry name" value="L28p-like"/>
    <property type="match status" value="1"/>
</dbReference>
<dbReference type="PROSITE" id="PS01143">
    <property type="entry name" value="RIBOSOMAL_L31"/>
    <property type="match status" value="1"/>
</dbReference>
<reference key="1">
    <citation type="submission" date="2007-09" db="EMBL/GenBank/DDBJ databases">
        <title>Complete sequence of chromosome of Serratia proteamaculans 568.</title>
        <authorList>
            <consortium name="US DOE Joint Genome Institute"/>
            <person name="Copeland A."/>
            <person name="Lucas S."/>
            <person name="Lapidus A."/>
            <person name="Barry K."/>
            <person name="Glavina del Rio T."/>
            <person name="Dalin E."/>
            <person name="Tice H."/>
            <person name="Pitluck S."/>
            <person name="Chain P."/>
            <person name="Malfatti S."/>
            <person name="Shin M."/>
            <person name="Vergez L."/>
            <person name="Schmutz J."/>
            <person name="Larimer F."/>
            <person name="Land M."/>
            <person name="Hauser L."/>
            <person name="Kyrpides N."/>
            <person name="Kim E."/>
            <person name="Taghavi S."/>
            <person name="Newman L."/>
            <person name="Vangronsveld J."/>
            <person name="van der Lelie D."/>
            <person name="Richardson P."/>
        </authorList>
    </citation>
    <scope>NUCLEOTIDE SEQUENCE [LARGE SCALE GENOMIC DNA]</scope>
    <source>
        <strain>568</strain>
    </source>
</reference>
<name>RL31_SERP5</name>
<comment type="function">
    <text evidence="1">Binds the 23S rRNA.</text>
</comment>
<comment type="cofactor">
    <cofactor evidence="1">
        <name>Zn(2+)</name>
        <dbReference type="ChEBI" id="CHEBI:29105"/>
    </cofactor>
    <text evidence="1">Binds 1 zinc ion per subunit.</text>
</comment>
<comment type="subunit">
    <text evidence="1">Part of the 50S ribosomal subunit.</text>
</comment>
<comment type="similarity">
    <text evidence="1">Belongs to the bacterial ribosomal protein bL31 family. Type A subfamily.</text>
</comment>